<sequence>MFVGSFTDKKPGTGIHVFDFNTKSGEAQLLSEVDSIINSSFLKLSPNGKYLYSVIESQLQTHGKIAAFKIDSNAGDLKLINMQDCGGRNPAHIEIDKSGKFLAVSNYTDPSLSFFEVDETGKIKKIDEFFTFTGSGIVKGNQDTAHIHSSNFSLENDYLFLQDLGSDCIHKFKVNLDANQNMSLQKADAIKVKPGSGPRHFVFHQNGKYGYGINELSGKVSAYALLNGNLKFLADYNAYSKKQDSYRSADIHISPDGKFLYASNRGPNEDSIVIFSINKSNGALKLIGHEPTYGEHPRNFAIDPSGQFLLVANQFSNNIVIFRRDVETGKLQKLPQELVVNGSSSLQMFTYSH</sequence>
<keyword id="KW-0119">Carbohydrate metabolism</keyword>
<keyword id="KW-0963">Cytoplasm</keyword>
<keyword id="KW-0313">Glucose metabolism</keyword>
<keyword id="KW-0378">Hydrolase</keyword>
<keyword id="KW-1185">Reference proteome</keyword>
<reference key="1">
    <citation type="journal article" date="2013" name="Appl. Environ. Microbiol.">
        <title>The genome of the alga-associated marine flavobacterium Formosa agariphila KMM 3901T reveals a broad potential for degradation of algal polysaccharides.</title>
        <authorList>
            <person name="Mann A.J."/>
            <person name="Hahnke R.L."/>
            <person name="Huang S."/>
            <person name="Werner J."/>
            <person name="Xing P."/>
            <person name="Barbeyron T."/>
            <person name="Huettel B."/>
            <person name="Stueber K."/>
            <person name="Reinhardt R."/>
            <person name="Harder J."/>
            <person name="Gloeckner F.O."/>
            <person name="Amann R.I."/>
            <person name="Teeling H."/>
        </authorList>
    </citation>
    <scope>NUCLEOTIDE SEQUENCE [LARGE SCALE GENOMIC DNA]</scope>
    <source>
        <strain>DSM 15362 / KCTC 12365 / LMG 23005 / KMM 3901 / M-2Alg 35-1</strain>
    </source>
</reference>
<reference key="2">
    <citation type="journal article" date="2019" name="Nat. Chem. Biol.">
        <title>A marine bacterial enzymatic cascade degrades the algal polysaccharide ulvan.</title>
        <authorList>
            <person name="Reisky L."/>
            <person name="Prechoux A."/>
            <person name="Zuehlke M.K."/>
            <person name="Baeumgen M."/>
            <person name="Robb C.S."/>
            <person name="Gerlach N."/>
            <person name="Roret T."/>
            <person name="Stanetty C."/>
            <person name="Larocque R."/>
            <person name="Michel G."/>
            <person name="Song T."/>
            <person name="Markert S."/>
            <person name="Unfried F."/>
            <person name="Mihovilovic M.D."/>
            <person name="Trautwein-Schult A."/>
            <person name="Becher D."/>
            <person name="Schweder T."/>
            <person name="Bornscheuer U.T."/>
            <person name="Hehemann J.H."/>
        </authorList>
    </citation>
    <scope>FUNCTION</scope>
    <scope>SUBCELLULAR LOCATION</scope>
    <scope>INDUCTION</scope>
</reference>
<name>PLH9_FORAG</name>
<proteinExistence type="evidence at transcript level"/>
<evidence type="ECO:0000250" key="1">
    <source>
        <dbReference type="UniProtKB" id="O34499"/>
    </source>
</evidence>
<evidence type="ECO:0000269" key="2">
    <source>
    </source>
</evidence>
<evidence type="ECO:0000303" key="3">
    <source>
    </source>
</evidence>
<evidence type="ECO:0000305" key="4"/>
<evidence type="ECO:0000305" key="5">
    <source>
    </source>
</evidence>
<comment type="function">
    <text evidence="1 5">Carboxylic ester hydrolase that may be involved in ulvan degradation (Probable). Ulvan is the main polysaccharide component of the Ulvales (green seaweed) cell wall. It is composed of disaccharide building blocks comprising 3-sulfated rhamnose (Rha3S) linked to D-glucuronic acid (GlcA), L-iduronic acid (IduA), or D-xylose (Xyl) (Probable). Catalyzes the hydrolysis of 6-phosphogluconolactone to 6-phosphogluconate (By similarity).</text>
</comment>
<comment type="catalytic activity">
    <reaction evidence="1">
        <text>6-phospho-D-glucono-1,5-lactone + H2O = 6-phospho-D-gluconate + H(+)</text>
        <dbReference type="Rhea" id="RHEA:12556"/>
        <dbReference type="ChEBI" id="CHEBI:15377"/>
        <dbReference type="ChEBI" id="CHEBI:15378"/>
        <dbReference type="ChEBI" id="CHEBI:57955"/>
        <dbReference type="ChEBI" id="CHEBI:58759"/>
        <dbReference type="EC" id="3.1.1.31"/>
    </reaction>
</comment>
<comment type="pathway">
    <text evidence="1">Carbohydrate degradation; pentose phosphate pathway; D-ribulose 5-phosphate from D-glucose 6-phosphate (oxidative stage): step 2/3.</text>
</comment>
<comment type="subcellular location">
    <subcellularLocation>
        <location evidence="2">Cytoplasm</location>
    </subcellularLocation>
</comment>
<comment type="induction">
    <text evidence="2">By ulvan and rhamnose.</text>
</comment>
<comment type="similarity">
    <text evidence="4">Belongs to the cycloisomerase 2 family.</text>
</comment>
<gene>
    <name type="primary">pgl</name>
    <name type="ORF">BN863_21980</name>
</gene>
<protein>
    <recommendedName>
        <fullName evidence="3">6-phosphogluconolactonase</fullName>
        <ecNumber evidence="1">3.1.1.31</ecNumber>
    </recommendedName>
    <alternativeName>
        <fullName evidence="3">P9_lactonase</fullName>
    </alternativeName>
    <alternativeName>
        <fullName evidence="3">Polysaccharide utilization locus H protein P9</fullName>
        <shortName>PUL H protein P9</shortName>
    </alternativeName>
</protein>
<dbReference type="EC" id="3.1.1.31" evidence="1"/>
<dbReference type="EMBL" id="HG315671">
    <property type="protein sequence ID" value="CDF79910.1"/>
    <property type="molecule type" value="Genomic_DNA"/>
</dbReference>
<dbReference type="SMR" id="T2KMF9"/>
<dbReference type="STRING" id="1347342.BN863_21980"/>
<dbReference type="PATRIC" id="fig|1347342.6.peg.2205"/>
<dbReference type="eggNOG" id="COG2706">
    <property type="taxonomic scope" value="Bacteria"/>
</dbReference>
<dbReference type="HOGENOM" id="CLU_038716_3_0_10"/>
<dbReference type="UniPathway" id="UPA00115">
    <property type="reaction ID" value="UER00409"/>
</dbReference>
<dbReference type="Proteomes" id="UP000016160">
    <property type="component" value="Chromosome"/>
</dbReference>
<dbReference type="GO" id="GO:0005737">
    <property type="term" value="C:cytoplasm"/>
    <property type="evidence" value="ECO:0007669"/>
    <property type="project" value="UniProtKB-SubCell"/>
</dbReference>
<dbReference type="GO" id="GO:0017057">
    <property type="term" value="F:6-phosphogluconolactonase activity"/>
    <property type="evidence" value="ECO:0007669"/>
    <property type="project" value="UniProtKB-EC"/>
</dbReference>
<dbReference type="GO" id="GO:0006006">
    <property type="term" value="P:glucose metabolic process"/>
    <property type="evidence" value="ECO:0007669"/>
    <property type="project" value="UniProtKB-KW"/>
</dbReference>
<dbReference type="GO" id="GO:0006098">
    <property type="term" value="P:pentose-phosphate shunt"/>
    <property type="evidence" value="ECO:0007669"/>
    <property type="project" value="UniProtKB-UniPathway"/>
</dbReference>
<dbReference type="Gene3D" id="2.130.10.10">
    <property type="entry name" value="YVTN repeat-like/Quinoprotein amine dehydrogenase"/>
    <property type="match status" value="1"/>
</dbReference>
<dbReference type="InterPro" id="IPR050282">
    <property type="entry name" value="Cycloisomerase_2"/>
</dbReference>
<dbReference type="InterPro" id="IPR011048">
    <property type="entry name" value="Haem_d1_sf"/>
</dbReference>
<dbReference type="InterPro" id="IPR019405">
    <property type="entry name" value="Lactonase_7-beta_prop"/>
</dbReference>
<dbReference type="InterPro" id="IPR015943">
    <property type="entry name" value="WD40/YVTN_repeat-like_dom_sf"/>
</dbReference>
<dbReference type="PANTHER" id="PTHR30344:SF1">
    <property type="entry name" value="6-PHOSPHOGLUCONOLACTONASE"/>
    <property type="match status" value="1"/>
</dbReference>
<dbReference type="PANTHER" id="PTHR30344">
    <property type="entry name" value="6-PHOSPHOGLUCONOLACTONASE-RELATED"/>
    <property type="match status" value="1"/>
</dbReference>
<dbReference type="Pfam" id="PF10282">
    <property type="entry name" value="Lactonase"/>
    <property type="match status" value="1"/>
</dbReference>
<dbReference type="SUPFAM" id="SSF51004">
    <property type="entry name" value="C-terminal (heme d1) domain of cytochrome cd1-nitrite reductase"/>
    <property type="match status" value="1"/>
</dbReference>
<organism>
    <name type="scientific">Formosa agariphila (strain DSM 15362 / KCTC 12365 / LMG 23005 / KMM 3901 / M-2Alg 35-1)</name>
    <dbReference type="NCBI Taxonomy" id="1347342"/>
    <lineage>
        <taxon>Bacteria</taxon>
        <taxon>Pseudomonadati</taxon>
        <taxon>Bacteroidota</taxon>
        <taxon>Flavobacteriia</taxon>
        <taxon>Flavobacteriales</taxon>
        <taxon>Flavobacteriaceae</taxon>
        <taxon>Formosa</taxon>
    </lineage>
</organism>
<accession>T2KMF9</accession>
<feature type="chain" id="PRO_0000448308" description="6-phosphogluconolactonase">
    <location>
        <begin position="1"/>
        <end position="353"/>
    </location>
</feature>